<keyword id="KW-0963">Cytoplasm</keyword>
<keyword id="KW-0444">Lipid biosynthesis</keyword>
<keyword id="KW-0443">Lipid metabolism</keyword>
<keyword id="KW-0594">Phospholipid biosynthesis</keyword>
<keyword id="KW-1208">Phospholipid metabolism</keyword>
<keyword id="KW-0808">Transferase</keyword>
<proteinExistence type="inferred from homology"/>
<gene>
    <name evidence="1" type="primary">plsX</name>
    <name type="ordered locus">Hac_0386</name>
</gene>
<comment type="function">
    <text evidence="1">Catalyzes the reversible formation of acyl-phosphate (acyl-PO(4)) from acyl-[acyl-carrier-protein] (acyl-ACP). This enzyme utilizes acyl-ACP as fatty acyl donor, but not acyl-CoA.</text>
</comment>
<comment type="catalytic activity">
    <reaction evidence="1">
        <text>a fatty acyl-[ACP] + phosphate = an acyl phosphate + holo-[ACP]</text>
        <dbReference type="Rhea" id="RHEA:42292"/>
        <dbReference type="Rhea" id="RHEA-COMP:9685"/>
        <dbReference type="Rhea" id="RHEA-COMP:14125"/>
        <dbReference type="ChEBI" id="CHEBI:43474"/>
        <dbReference type="ChEBI" id="CHEBI:59918"/>
        <dbReference type="ChEBI" id="CHEBI:64479"/>
        <dbReference type="ChEBI" id="CHEBI:138651"/>
        <dbReference type="EC" id="2.3.1.274"/>
    </reaction>
</comment>
<comment type="pathway">
    <text evidence="1">Lipid metabolism; phospholipid metabolism.</text>
</comment>
<comment type="subunit">
    <text evidence="1">Homodimer. Probably interacts with PlsY.</text>
</comment>
<comment type="subcellular location">
    <subcellularLocation>
        <location evidence="1">Cytoplasm</location>
    </subcellularLocation>
    <text evidence="1">Associated with the membrane possibly through PlsY.</text>
</comment>
<comment type="similarity">
    <text evidence="1">Belongs to the PlsX family.</text>
</comment>
<sequence length="339" mass="36459">MKIVIDLMGADHGVLPIIEGVSRALENKSFGAVLVGDKDKATPFISKELASKVEMIHTQDYIKMEEAATEAIKRKESSIYLGMDILKNGADALISAGHSGATMGLATLRLGRIKGVERPAICTLMPSVGKRPSVLLDAGANTDCKPEYLIDFALMGYEYAKSVLGYDSPKVGLLSNGEEDIKGNMLVKETHKMLKAYDFFYGNVEGSDIFKGLVDVVVCDGFMGNVVLKTTEGVASAIGSIFKDEIKSCLKSKIGALMLKNAFDTLRQKTDYAEYGGAPLLGVNKSVIISHGKSNARAIECAIYQAISTVKSQVCLRITKAFESLKPSASTHQSDQQDA</sequence>
<accession>Q17YQ3</accession>
<organism>
    <name type="scientific">Helicobacter acinonychis (strain Sheeba)</name>
    <dbReference type="NCBI Taxonomy" id="382638"/>
    <lineage>
        <taxon>Bacteria</taxon>
        <taxon>Pseudomonadati</taxon>
        <taxon>Campylobacterota</taxon>
        <taxon>Epsilonproteobacteria</taxon>
        <taxon>Campylobacterales</taxon>
        <taxon>Helicobacteraceae</taxon>
        <taxon>Helicobacter</taxon>
    </lineage>
</organism>
<dbReference type="EC" id="2.3.1.274" evidence="1"/>
<dbReference type="EMBL" id="AM260522">
    <property type="protein sequence ID" value="CAJ99223.1"/>
    <property type="molecule type" value="Genomic_DNA"/>
</dbReference>
<dbReference type="RefSeq" id="WP_011577337.1">
    <property type="nucleotide sequence ID" value="NC_008229.1"/>
</dbReference>
<dbReference type="SMR" id="Q17YQ3"/>
<dbReference type="STRING" id="382638.Hac_0386"/>
<dbReference type="GeneID" id="31757894"/>
<dbReference type="KEGG" id="hac:Hac_0386"/>
<dbReference type="eggNOG" id="COG0416">
    <property type="taxonomic scope" value="Bacteria"/>
</dbReference>
<dbReference type="HOGENOM" id="CLU_039379_1_1_7"/>
<dbReference type="BioCyc" id="HACI382638:HAC_RS01750-MONOMER"/>
<dbReference type="UniPathway" id="UPA00085"/>
<dbReference type="Proteomes" id="UP000000775">
    <property type="component" value="Chromosome"/>
</dbReference>
<dbReference type="GO" id="GO:0005737">
    <property type="term" value="C:cytoplasm"/>
    <property type="evidence" value="ECO:0007669"/>
    <property type="project" value="UniProtKB-SubCell"/>
</dbReference>
<dbReference type="GO" id="GO:0043811">
    <property type="term" value="F:phosphate:acyl-[acyl carrier protein] acyltransferase activity"/>
    <property type="evidence" value="ECO:0007669"/>
    <property type="project" value="UniProtKB-UniRule"/>
</dbReference>
<dbReference type="GO" id="GO:0006633">
    <property type="term" value="P:fatty acid biosynthetic process"/>
    <property type="evidence" value="ECO:0007669"/>
    <property type="project" value="UniProtKB-UniRule"/>
</dbReference>
<dbReference type="GO" id="GO:0008654">
    <property type="term" value="P:phospholipid biosynthetic process"/>
    <property type="evidence" value="ECO:0007669"/>
    <property type="project" value="UniProtKB-KW"/>
</dbReference>
<dbReference type="Gene3D" id="3.40.718.10">
    <property type="entry name" value="Isopropylmalate Dehydrogenase"/>
    <property type="match status" value="1"/>
</dbReference>
<dbReference type="HAMAP" id="MF_00019">
    <property type="entry name" value="PlsX"/>
    <property type="match status" value="1"/>
</dbReference>
<dbReference type="InterPro" id="IPR003664">
    <property type="entry name" value="FA_synthesis"/>
</dbReference>
<dbReference type="InterPro" id="IPR012281">
    <property type="entry name" value="Phospholipid_synth_PlsX-like"/>
</dbReference>
<dbReference type="NCBIfam" id="TIGR00182">
    <property type="entry name" value="plsX"/>
    <property type="match status" value="1"/>
</dbReference>
<dbReference type="PANTHER" id="PTHR30100">
    <property type="entry name" value="FATTY ACID/PHOSPHOLIPID SYNTHESIS PROTEIN PLSX"/>
    <property type="match status" value="1"/>
</dbReference>
<dbReference type="PANTHER" id="PTHR30100:SF1">
    <property type="entry name" value="PHOSPHATE ACYLTRANSFERASE"/>
    <property type="match status" value="1"/>
</dbReference>
<dbReference type="Pfam" id="PF02504">
    <property type="entry name" value="FA_synthesis"/>
    <property type="match status" value="1"/>
</dbReference>
<dbReference type="PIRSF" id="PIRSF002465">
    <property type="entry name" value="Phsphlp_syn_PlsX"/>
    <property type="match status" value="1"/>
</dbReference>
<dbReference type="SUPFAM" id="SSF53659">
    <property type="entry name" value="Isocitrate/Isopropylmalate dehydrogenase-like"/>
    <property type="match status" value="1"/>
</dbReference>
<feature type="chain" id="PRO_1000001768" description="Phosphate acyltransferase">
    <location>
        <begin position="1"/>
        <end position="339"/>
    </location>
</feature>
<protein>
    <recommendedName>
        <fullName evidence="1">Phosphate acyltransferase</fullName>
        <ecNumber evidence="1">2.3.1.274</ecNumber>
    </recommendedName>
    <alternativeName>
        <fullName evidence="1">Acyl-ACP phosphotransacylase</fullName>
    </alternativeName>
    <alternativeName>
        <fullName evidence="1">Acyl-[acyl-carrier-protein]--phosphate acyltransferase</fullName>
    </alternativeName>
    <alternativeName>
        <fullName evidence="1">Phosphate-acyl-ACP acyltransferase</fullName>
    </alternativeName>
</protein>
<name>PLSX_HELAH</name>
<reference key="1">
    <citation type="journal article" date="2006" name="PLoS Genet.">
        <title>Who ate whom? Adaptive Helicobacter genomic changes that accompanied a host jump from early humans to large felines.</title>
        <authorList>
            <person name="Eppinger M."/>
            <person name="Baar C."/>
            <person name="Linz B."/>
            <person name="Raddatz G."/>
            <person name="Lanz C."/>
            <person name="Keller H."/>
            <person name="Morelli G."/>
            <person name="Gressmann H."/>
            <person name="Achtman M."/>
            <person name="Schuster S.C."/>
        </authorList>
    </citation>
    <scope>NUCLEOTIDE SEQUENCE [LARGE SCALE GENOMIC DNA]</scope>
    <source>
        <strain>Sheeba</strain>
    </source>
</reference>
<evidence type="ECO:0000255" key="1">
    <source>
        <dbReference type="HAMAP-Rule" id="MF_00019"/>
    </source>
</evidence>